<keyword id="KW-0004">4Fe-4S</keyword>
<keyword id="KW-0997">Cell inner membrane</keyword>
<keyword id="KW-1003">Cell membrane</keyword>
<keyword id="KW-0408">Iron</keyword>
<keyword id="KW-0411">Iron-sulfur</keyword>
<keyword id="KW-0472">Membrane</keyword>
<keyword id="KW-0479">Metal-binding</keyword>
<keyword id="KW-0520">NAD</keyword>
<keyword id="KW-0874">Quinone</keyword>
<keyword id="KW-1185">Reference proteome</keyword>
<keyword id="KW-0677">Repeat</keyword>
<keyword id="KW-1278">Translocase</keyword>
<keyword id="KW-0830">Ubiquinone</keyword>
<evidence type="ECO:0000255" key="1">
    <source>
        <dbReference type="HAMAP-Rule" id="MF_01351"/>
    </source>
</evidence>
<organism>
    <name type="scientific">Burkholderia mallei (strain ATCC 23344)</name>
    <dbReference type="NCBI Taxonomy" id="243160"/>
    <lineage>
        <taxon>Bacteria</taxon>
        <taxon>Pseudomonadati</taxon>
        <taxon>Pseudomonadota</taxon>
        <taxon>Betaproteobacteria</taxon>
        <taxon>Burkholderiales</taxon>
        <taxon>Burkholderiaceae</taxon>
        <taxon>Burkholderia</taxon>
        <taxon>pseudomallei group</taxon>
    </lineage>
</organism>
<comment type="function">
    <text evidence="1">NDH-1 shuttles electrons from NADH, via FMN and iron-sulfur (Fe-S) centers, to quinones in the respiratory chain. The immediate electron acceptor for the enzyme in this species is believed to be ubiquinone. Couples the redox reaction to proton translocation (for every two electrons transferred, four hydrogen ions are translocated across the cytoplasmic membrane), and thus conserves the redox energy in a proton gradient.</text>
</comment>
<comment type="catalytic activity">
    <reaction evidence="1">
        <text>a quinone + NADH + 5 H(+)(in) = a quinol + NAD(+) + 4 H(+)(out)</text>
        <dbReference type="Rhea" id="RHEA:57888"/>
        <dbReference type="ChEBI" id="CHEBI:15378"/>
        <dbReference type="ChEBI" id="CHEBI:24646"/>
        <dbReference type="ChEBI" id="CHEBI:57540"/>
        <dbReference type="ChEBI" id="CHEBI:57945"/>
        <dbReference type="ChEBI" id="CHEBI:132124"/>
    </reaction>
</comment>
<comment type="cofactor">
    <cofactor evidence="1">
        <name>[4Fe-4S] cluster</name>
        <dbReference type="ChEBI" id="CHEBI:49883"/>
    </cofactor>
    <text evidence="1">Binds 2 [4Fe-4S] clusters per subunit.</text>
</comment>
<comment type="subunit">
    <text evidence="1">NDH-1 is composed of 14 different subunits. Subunits NuoA, H, J, K, L, M, N constitute the membrane sector of the complex.</text>
</comment>
<comment type="subcellular location">
    <subcellularLocation>
        <location evidence="1">Cell inner membrane</location>
        <topology evidence="1">Peripheral membrane protein</topology>
    </subcellularLocation>
</comment>
<comment type="similarity">
    <text evidence="1">Belongs to the complex I 23 kDa subunit family.</text>
</comment>
<sequence>MTAIQQFFKTFFLTELLKGLALTGRYTFKRKFTVQFPEEKTPISPRFRGLHALRRYENGEERCIACKLCEAVCPALAITIESETRADNTRRTTRYDIDLTKCIFCGFCEESCPVDSIVETQILEYHGEKRGDLYFTKDMLLAVGDRYEKEIAAAKAADARYR</sequence>
<reference key="1">
    <citation type="journal article" date="2004" name="Proc. Natl. Acad. Sci. U.S.A.">
        <title>Structural flexibility in the Burkholderia mallei genome.</title>
        <authorList>
            <person name="Nierman W.C."/>
            <person name="DeShazer D."/>
            <person name="Kim H.S."/>
            <person name="Tettelin H."/>
            <person name="Nelson K.E."/>
            <person name="Feldblyum T.V."/>
            <person name="Ulrich R.L."/>
            <person name="Ronning C.M."/>
            <person name="Brinkac L.M."/>
            <person name="Daugherty S.C."/>
            <person name="Davidsen T.D."/>
            <person name="DeBoy R.T."/>
            <person name="Dimitrov G."/>
            <person name="Dodson R.J."/>
            <person name="Durkin A.S."/>
            <person name="Gwinn M.L."/>
            <person name="Haft D.H."/>
            <person name="Khouri H.M."/>
            <person name="Kolonay J.F."/>
            <person name="Madupu R."/>
            <person name="Mohammoud Y."/>
            <person name="Nelson W.C."/>
            <person name="Radune D."/>
            <person name="Romero C.M."/>
            <person name="Sarria S."/>
            <person name="Selengut J."/>
            <person name="Shamblin C."/>
            <person name="Sullivan S.A."/>
            <person name="White O."/>
            <person name="Yu Y."/>
            <person name="Zafar N."/>
            <person name="Zhou L."/>
            <person name="Fraser C.M."/>
        </authorList>
    </citation>
    <scope>NUCLEOTIDE SEQUENCE [LARGE SCALE GENOMIC DNA]</scope>
    <source>
        <strain>ATCC 23344</strain>
    </source>
</reference>
<proteinExistence type="inferred from homology"/>
<gene>
    <name evidence="1" type="primary">nuoI</name>
    <name type="ordered locus">BMA1821</name>
</gene>
<protein>
    <recommendedName>
        <fullName evidence="1">NADH-quinone oxidoreductase subunit I</fullName>
        <ecNumber evidence="1">7.1.1.-</ecNumber>
    </recommendedName>
    <alternativeName>
        <fullName evidence="1">NADH dehydrogenase I subunit I</fullName>
    </alternativeName>
    <alternativeName>
        <fullName evidence="1">NDH-1 subunit I</fullName>
    </alternativeName>
</protein>
<dbReference type="EC" id="7.1.1.-" evidence="1"/>
<dbReference type="EMBL" id="CP000010">
    <property type="protein sequence ID" value="AAU49823.1"/>
    <property type="molecule type" value="Genomic_DNA"/>
</dbReference>
<dbReference type="RefSeq" id="WP_004186558.1">
    <property type="nucleotide sequence ID" value="NC_006348.1"/>
</dbReference>
<dbReference type="RefSeq" id="YP_103426.1">
    <property type="nucleotide sequence ID" value="NC_006348.1"/>
</dbReference>
<dbReference type="SMR" id="Q62IP3"/>
<dbReference type="GeneID" id="93059702"/>
<dbReference type="KEGG" id="bma:BMA1821"/>
<dbReference type="PATRIC" id="fig|243160.12.peg.1859"/>
<dbReference type="eggNOG" id="COG1143">
    <property type="taxonomic scope" value="Bacteria"/>
</dbReference>
<dbReference type="HOGENOM" id="CLU_067218_5_1_4"/>
<dbReference type="Proteomes" id="UP000006693">
    <property type="component" value="Chromosome 1"/>
</dbReference>
<dbReference type="GO" id="GO:0005886">
    <property type="term" value="C:plasma membrane"/>
    <property type="evidence" value="ECO:0007669"/>
    <property type="project" value="UniProtKB-SubCell"/>
</dbReference>
<dbReference type="GO" id="GO:0051539">
    <property type="term" value="F:4 iron, 4 sulfur cluster binding"/>
    <property type="evidence" value="ECO:0007669"/>
    <property type="project" value="UniProtKB-KW"/>
</dbReference>
<dbReference type="GO" id="GO:0005506">
    <property type="term" value="F:iron ion binding"/>
    <property type="evidence" value="ECO:0007669"/>
    <property type="project" value="UniProtKB-UniRule"/>
</dbReference>
<dbReference type="GO" id="GO:0050136">
    <property type="term" value="F:NADH:ubiquinone reductase (non-electrogenic) activity"/>
    <property type="evidence" value="ECO:0007669"/>
    <property type="project" value="UniProtKB-UniRule"/>
</dbReference>
<dbReference type="GO" id="GO:0048038">
    <property type="term" value="F:quinone binding"/>
    <property type="evidence" value="ECO:0007669"/>
    <property type="project" value="UniProtKB-KW"/>
</dbReference>
<dbReference type="GO" id="GO:0009060">
    <property type="term" value="P:aerobic respiration"/>
    <property type="evidence" value="ECO:0007669"/>
    <property type="project" value="TreeGrafter"/>
</dbReference>
<dbReference type="FunFam" id="3.30.70.3270:FF:000003">
    <property type="entry name" value="NADH-quinone oxidoreductase subunit I"/>
    <property type="match status" value="1"/>
</dbReference>
<dbReference type="Gene3D" id="3.30.70.3270">
    <property type="match status" value="1"/>
</dbReference>
<dbReference type="HAMAP" id="MF_01351">
    <property type="entry name" value="NDH1_NuoI"/>
    <property type="match status" value="1"/>
</dbReference>
<dbReference type="InterPro" id="IPR017896">
    <property type="entry name" value="4Fe4S_Fe-S-bd"/>
</dbReference>
<dbReference type="InterPro" id="IPR017900">
    <property type="entry name" value="4Fe4S_Fe_S_CS"/>
</dbReference>
<dbReference type="InterPro" id="IPR010226">
    <property type="entry name" value="NADH_quinone_OxRdtase_chainI"/>
</dbReference>
<dbReference type="NCBIfam" id="TIGR01971">
    <property type="entry name" value="NuoI"/>
    <property type="match status" value="1"/>
</dbReference>
<dbReference type="NCBIfam" id="NF004538">
    <property type="entry name" value="PRK05888.1-4"/>
    <property type="match status" value="1"/>
</dbReference>
<dbReference type="NCBIfam" id="NF004539">
    <property type="entry name" value="PRK05888.1-5"/>
    <property type="match status" value="1"/>
</dbReference>
<dbReference type="PANTHER" id="PTHR10849:SF20">
    <property type="entry name" value="NADH DEHYDROGENASE [UBIQUINONE] IRON-SULFUR PROTEIN 8, MITOCHONDRIAL"/>
    <property type="match status" value="1"/>
</dbReference>
<dbReference type="PANTHER" id="PTHR10849">
    <property type="entry name" value="NADH DEHYDROGENASE UBIQUINONE IRON-SULFUR PROTEIN 8, MITOCHONDRIAL"/>
    <property type="match status" value="1"/>
</dbReference>
<dbReference type="Pfam" id="PF12838">
    <property type="entry name" value="Fer4_7"/>
    <property type="match status" value="1"/>
</dbReference>
<dbReference type="SUPFAM" id="SSF54862">
    <property type="entry name" value="4Fe-4S ferredoxins"/>
    <property type="match status" value="1"/>
</dbReference>
<dbReference type="PROSITE" id="PS00198">
    <property type="entry name" value="4FE4S_FER_1"/>
    <property type="match status" value="2"/>
</dbReference>
<dbReference type="PROSITE" id="PS51379">
    <property type="entry name" value="4FE4S_FER_2"/>
    <property type="match status" value="2"/>
</dbReference>
<name>NUOI_BURMA</name>
<feature type="chain" id="PRO_0000250888" description="NADH-quinone oxidoreductase subunit I">
    <location>
        <begin position="1"/>
        <end position="162"/>
    </location>
</feature>
<feature type="domain" description="4Fe-4S ferredoxin-type 1" evidence="1">
    <location>
        <begin position="54"/>
        <end position="83"/>
    </location>
</feature>
<feature type="domain" description="4Fe-4S ferredoxin-type 2" evidence="1">
    <location>
        <begin position="93"/>
        <end position="122"/>
    </location>
</feature>
<feature type="binding site" evidence="1">
    <location>
        <position position="63"/>
    </location>
    <ligand>
        <name>[4Fe-4S] cluster</name>
        <dbReference type="ChEBI" id="CHEBI:49883"/>
        <label>1</label>
    </ligand>
</feature>
<feature type="binding site" evidence="1">
    <location>
        <position position="66"/>
    </location>
    <ligand>
        <name>[4Fe-4S] cluster</name>
        <dbReference type="ChEBI" id="CHEBI:49883"/>
        <label>1</label>
    </ligand>
</feature>
<feature type="binding site" evidence="1">
    <location>
        <position position="69"/>
    </location>
    <ligand>
        <name>[4Fe-4S] cluster</name>
        <dbReference type="ChEBI" id="CHEBI:49883"/>
        <label>1</label>
    </ligand>
</feature>
<feature type="binding site" evidence="1">
    <location>
        <position position="73"/>
    </location>
    <ligand>
        <name>[4Fe-4S] cluster</name>
        <dbReference type="ChEBI" id="CHEBI:49883"/>
        <label>2</label>
    </ligand>
</feature>
<feature type="binding site" evidence="1">
    <location>
        <position position="102"/>
    </location>
    <ligand>
        <name>[4Fe-4S] cluster</name>
        <dbReference type="ChEBI" id="CHEBI:49883"/>
        <label>2</label>
    </ligand>
</feature>
<feature type="binding site" evidence="1">
    <location>
        <position position="105"/>
    </location>
    <ligand>
        <name>[4Fe-4S] cluster</name>
        <dbReference type="ChEBI" id="CHEBI:49883"/>
        <label>2</label>
    </ligand>
</feature>
<feature type="binding site" evidence="1">
    <location>
        <position position="108"/>
    </location>
    <ligand>
        <name>[4Fe-4S] cluster</name>
        <dbReference type="ChEBI" id="CHEBI:49883"/>
        <label>2</label>
    </ligand>
</feature>
<feature type="binding site" evidence="1">
    <location>
        <position position="112"/>
    </location>
    <ligand>
        <name>[4Fe-4S] cluster</name>
        <dbReference type="ChEBI" id="CHEBI:49883"/>
        <label>1</label>
    </ligand>
</feature>
<accession>Q62IP3</accession>